<evidence type="ECO:0000250" key="1">
    <source>
        <dbReference type="UniProtKB" id="P03001"/>
    </source>
</evidence>
<evidence type="ECO:0000250" key="2">
    <source>
        <dbReference type="UniProtKB" id="P17842"/>
    </source>
</evidence>
<evidence type="ECO:0000250" key="3">
    <source>
        <dbReference type="UniProtKB" id="Q92664"/>
    </source>
</evidence>
<evidence type="ECO:0000255" key="4">
    <source>
        <dbReference type="PROSITE-ProRule" id="PRU00042"/>
    </source>
</evidence>
<evidence type="ECO:0000256" key="5">
    <source>
        <dbReference type="SAM" id="MobiDB-lite"/>
    </source>
</evidence>
<protein>
    <recommendedName>
        <fullName>Transcription factor IIIA</fullName>
        <shortName>TFIIIA</shortName>
    </recommendedName>
</protein>
<keyword id="KW-0238">DNA-binding</keyword>
<keyword id="KW-0479">Metal-binding</keyword>
<keyword id="KW-0539">Nucleus</keyword>
<keyword id="KW-0677">Repeat</keyword>
<keyword id="KW-0690">Ribosome biogenesis</keyword>
<keyword id="KW-0694">RNA-binding</keyword>
<keyword id="KW-0804">Transcription</keyword>
<keyword id="KW-0805">Transcription regulation</keyword>
<keyword id="KW-0862">Zinc</keyword>
<keyword id="KW-0863">Zinc-finger</keyword>
<reference key="1">
    <citation type="journal article" date="1997" name="Gene">
        <title>Molecular biology of vertebrate transcription factor IIIA: cloning and characterization of TFIIIA from channel catfish oocytes.</title>
        <authorList>
            <person name="Ogilvie M.K."/>
            <person name="Hanas J.S."/>
        </authorList>
    </citation>
    <scope>NUCLEOTIDE SEQUENCE [MRNA]</scope>
    <source>
        <tissue>Ovary</tissue>
    </source>
</reference>
<feature type="chain" id="PRO_0000047082" description="Transcription factor IIIA">
    <location>
        <begin position="1"/>
        <end position="322"/>
    </location>
</feature>
<feature type="zinc finger region" description="C2H2-type 1" evidence="4">
    <location>
        <begin position="12"/>
        <end position="36"/>
    </location>
</feature>
<feature type="zinc finger region" description="C2H2-type 2" evidence="4">
    <location>
        <begin position="42"/>
        <end position="64"/>
    </location>
</feature>
<feature type="zinc finger region" description="C2H2-type 3" evidence="4">
    <location>
        <begin position="70"/>
        <end position="95"/>
    </location>
</feature>
<feature type="zinc finger region" description="C2H2-type 4" evidence="4">
    <location>
        <begin position="102"/>
        <end position="126"/>
    </location>
</feature>
<feature type="zinc finger region" description="C2H2-type 5" evidence="4">
    <location>
        <begin position="132"/>
        <end position="156"/>
    </location>
</feature>
<feature type="zinc finger region" description="C2H2-type 6" evidence="4">
    <location>
        <begin position="159"/>
        <end position="184"/>
    </location>
</feature>
<feature type="zinc finger region" description="C2H2-type 7" evidence="4">
    <location>
        <begin position="188"/>
        <end position="211"/>
    </location>
</feature>
<feature type="zinc finger region" description="C2H2-type 8" evidence="4">
    <location>
        <begin position="218"/>
        <end position="243"/>
    </location>
</feature>
<feature type="zinc finger region" description="C2H2-type 9" evidence="4">
    <location>
        <begin position="249"/>
        <end position="273"/>
    </location>
</feature>
<feature type="region of interest" description="Disordered" evidence="5">
    <location>
        <begin position="272"/>
        <end position="322"/>
    </location>
</feature>
<feature type="compositionally biased region" description="Basic residues" evidence="5">
    <location>
        <begin position="278"/>
        <end position="292"/>
    </location>
</feature>
<feature type="compositionally biased region" description="Polar residues" evidence="5">
    <location>
        <begin position="312"/>
        <end position="322"/>
    </location>
</feature>
<sequence>MGERFKDPAKNFVCSFLNCKASFSKAWKLEAHYCKHTGLRPFACDRCDKTFCTRCQLTRHNLSHSGKKPYQCLEDGCSESFISTAGLKNHVERVHQHKEKHYVCDYEGCAKEFRKKKQLRSHKCEHMNQLPFECQYEGCGKKYTTSKKLQKHEKVHDVYPCAEEGCDFQGRMWTEYQAHRKAAHREALQCDSCAKVFHKAWFLKKHKLFVHLGVRRVFKCTKEGCQKTYTTHFNLQNHILSFHEGIRSFICPHDGCGKAFAMEGSLKRHAVVHDPQKKKLQKKTKRGRKKKLEPKTNVSDDSELPAQLHGLSLNTSTSQNNP</sequence>
<accession>P79797</accession>
<gene>
    <name type="primary">gtf3a</name>
</gene>
<comment type="function">
    <text evidence="1 2 3">Involved in ribosomal large subunit biogenesis. Interacts with the internal control region (ICR) of approximately 50 bases within the 5S RNA genes, is required for correct transcription of these genes by RNA polymerase III. Also binds the transcribed 5S RNA's (By similarity).</text>
</comment>
<comment type="subcellular location">
    <subcellularLocation>
        <location>Nucleus</location>
    </subcellularLocation>
</comment>
<name>TF3A_ICTPU</name>
<dbReference type="EMBL" id="Z68499">
    <property type="protein sequence ID" value="CAA92808.1"/>
    <property type="molecule type" value="mRNA"/>
</dbReference>
<dbReference type="RefSeq" id="NP_001187205.1">
    <property type="nucleotide sequence ID" value="NM_001200276.1"/>
</dbReference>
<dbReference type="SMR" id="P79797"/>
<dbReference type="STRING" id="7998.ENSIPUP00000015796"/>
<dbReference type="GeneID" id="100305039"/>
<dbReference type="KEGG" id="ipu:100305039"/>
<dbReference type="CTD" id="100037394"/>
<dbReference type="OrthoDB" id="2687452at2759"/>
<dbReference type="Proteomes" id="UP000221080">
    <property type="component" value="Chromosome 23"/>
</dbReference>
<dbReference type="GO" id="GO:0005634">
    <property type="term" value="C:nucleus"/>
    <property type="evidence" value="ECO:0000314"/>
    <property type="project" value="AgBase"/>
</dbReference>
<dbReference type="GO" id="GO:0003677">
    <property type="term" value="F:DNA binding"/>
    <property type="evidence" value="ECO:0007669"/>
    <property type="project" value="UniProtKB-KW"/>
</dbReference>
<dbReference type="GO" id="GO:0003723">
    <property type="term" value="F:RNA binding"/>
    <property type="evidence" value="ECO:0007669"/>
    <property type="project" value="UniProtKB-KW"/>
</dbReference>
<dbReference type="GO" id="GO:0008270">
    <property type="term" value="F:zinc ion binding"/>
    <property type="evidence" value="ECO:0007669"/>
    <property type="project" value="UniProtKB-KW"/>
</dbReference>
<dbReference type="GO" id="GO:0045893">
    <property type="term" value="P:positive regulation of DNA-templated transcription"/>
    <property type="evidence" value="ECO:0000315"/>
    <property type="project" value="AgBase"/>
</dbReference>
<dbReference type="GO" id="GO:0042273">
    <property type="term" value="P:ribosomal large subunit biogenesis"/>
    <property type="evidence" value="ECO:0000250"/>
    <property type="project" value="UniProtKB"/>
</dbReference>
<dbReference type="FunFam" id="3.30.160.60:FF:001102">
    <property type="entry name" value="Transcription factor IIIA"/>
    <property type="match status" value="1"/>
</dbReference>
<dbReference type="FunFam" id="3.30.160.60:FF:003786">
    <property type="entry name" value="Transcription factor IIIA"/>
    <property type="match status" value="1"/>
</dbReference>
<dbReference type="FunFam" id="3.30.160.60:FF:000446">
    <property type="entry name" value="Zinc finger protein"/>
    <property type="match status" value="1"/>
</dbReference>
<dbReference type="Gene3D" id="3.30.160.60">
    <property type="entry name" value="Classic Zinc Finger"/>
    <property type="match status" value="8"/>
</dbReference>
<dbReference type="InterPro" id="IPR054599">
    <property type="entry name" value="TFIIIA_Zfn-C2H2"/>
</dbReference>
<dbReference type="InterPro" id="IPR051061">
    <property type="entry name" value="Zinc_finger_trans_reg"/>
</dbReference>
<dbReference type="InterPro" id="IPR036236">
    <property type="entry name" value="Znf_C2H2_sf"/>
</dbReference>
<dbReference type="InterPro" id="IPR013087">
    <property type="entry name" value="Znf_C2H2_type"/>
</dbReference>
<dbReference type="PANTHER" id="PTHR46179:SF1">
    <property type="entry name" value="TRANSCRIPTION FACTOR IIIA"/>
    <property type="match status" value="1"/>
</dbReference>
<dbReference type="PANTHER" id="PTHR46179">
    <property type="entry name" value="ZINC FINGER PROTEIN"/>
    <property type="match status" value="1"/>
</dbReference>
<dbReference type="Pfam" id="PF22110">
    <property type="entry name" value="TFIIIA_zf-C2H2"/>
    <property type="match status" value="1"/>
</dbReference>
<dbReference type="Pfam" id="PF00096">
    <property type="entry name" value="zf-C2H2"/>
    <property type="match status" value="2"/>
</dbReference>
<dbReference type="SMART" id="SM00355">
    <property type="entry name" value="ZnF_C2H2"/>
    <property type="match status" value="9"/>
</dbReference>
<dbReference type="SUPFAM" id="SSF57667">
    <property type="entry name" value="beta-beta-alpha zinc fingers"/>
    <property type="match status" value="5"/>
</dbReference>
<dbReference type="PROSITE" id="PS00028">
    <property type="entry name" value="ZINC_FINGER_C2H2_1"/>
    <property type="match status" value="8"/>
</dbReference>
<dbReference type="PROSITE" id="PS50157">
    <property type="entry name" value="ZINC_FINGER_C2H2_2"/>
    <property type="match status" value="8"/>
</dbReference>
<proteinExistence type="evidence at transcript level"/>
<organism>
    <name type="scientific">Ictalurus punctatus</name>
    <name type="common">Channel catfish</name>
    <name type="synonym">Silurus punctatus</name>
    <dbReference type="NCBI Taxonomy" id="7998"/>
    <lineage>
        <taxon>Eukaryota</taxon>
        <taxon>Metazoa</taxon>
        <taxon>Chordata</taxon>
        <taxon>Craniata</taxon>
        <taxon>Vertebrata</taxon>
        <taxon>Euteleostomi</taxon>
        <taxon>Actinopterygii</taxon>
        <taxon>Neopterygii</taxon>
        <taxon>Teleostei</taxon>
        <taxon>Ostariophysi</taxon>
        <taxon>Siluriformes</taxon>
        <taxon>Ictaluridae</taxon>
        <taxon>Ictalurus</taxon>
    </lineage>
</organism>